<name>HISZ_RHIME</name>
<gene>
    <name type="primary">hisZ</name>
    <name type="ordered locus">R00787</name>
    <name type="ORF">SMc00918</name>
</gene>
<feature type="chain" id="PRO_0000171058" description="ATP phosphoribosyltransferase regulatory subunit">
    <location>
        <begin position="1"/>
        <end position="379"/>
    </location>
</feature>
<organism>
    <name type="scientific">Rhizobium meliloti (strain 1021)</name>
    <name type="common">Ensifer meliloti</name>
    <name type="synonym">Sinorhizobium meliloti</name>
    <dbReference type="NCBI Taxonomy" id="266834"/>
    <lineage>
        <taxon>Bacteria</taxon>
        <taxon>Pseudomonadati</taxon>
        <taxon>Pseudomonadota</taxon>
        <taxon>Alphaproteobacteria</taxon>
        <taxon>Hyphomicrobiales</taxon>
        <taxon>Rhizobiaceae</taxon>
        <taxon>Sinorhizobium/Ensifer group</taxon>
        <taxon>Sinorhizobium</taxon>
    </lineage>
</organism>
<keyword id="KW-0028">Amino-acid biosynthesis</keyword>
<keyword id="KW-0963">Cytoplasm</keyword>
<keyword id="KW-0368">Histidine biosynthesis</keyword>
<keyword id="KW-1185">Reference proteome</keyword>
<dbReference type="EMBL" id="AL591688">
    <property type="protein sequence ID" value="CAC45359.1"/>
    <property type="molecule type" value="Genomic_DNA"/>
</dbReference>
<dbReference type="RefSeq" id="NP_384893.1">
    <property type="nucleotide sequence ID" value="NC_003047.1"/>
</dbReference>
<dbReference type="RefSeq" id="WP_010968818.1">
    <property type="nucleotide sequence ID" value="NC_003047.1"/>
</dbReference>
<dbReference type="SMR" id="Q92KL6"/>
<dbReference type="EnsemblBacteria" id="CAC45359">
    <property type="protein sequence ID" value="CAC45359"/>
    <property type="gene ID" value="SMc00918"/>
</dbReference>
<dbReference type="KEGG" id="sme:SMc00918"/>
<dbReference type="PATRIC" id="fig|266834.11.peg.2174"/>
<dbReference type="eggNOG" id="COG3705">
    <property type="taxonomic scope" value="Bacteria"/>
</dbReference>
<dbReference type="HOGENOM" id="CLU_025113_6_0_5"/>
<dbReference type="OrthoDB" id="9797914at2"/>
<dbReference type="UniPathway" id="UPA00031">
    <property type="reaction ID" value="UER00006"/>
</dbReference>
<dbReference type="Proteomes" id="UP000001976">
    <property type="component" value="Chromosome"/>
</dbReference>
<dbReference type="GO" id="GO:0005737">
    <property type="term" value="C:cytoplasm"/>
    <property type="evidence" value="ECO:0007669"/>
    <property type="project" value="UniProtKB-SubCell"/>
</dbReference>
<dbReference type="GO" id="GO:0004821">
    <property type="term" value="F:histidine-tRNA ligase activity"/>
    <property type="evidence" value="ECO:0007669"/>
    <property type="project" value="TreeGrafter"/>
</dbReference>
<dbReference type="GO" id="GO:0006427">
    <property type="term" value="P:histidyl-tRNA aminoacylation"/>
    <property type="evidence" value="ECO:0007669"/>
    <property type="project" value="TreeGrafter"/>
</dbReference>
<dbReference type="GO" id="GO:0000105">
    <property type="term" value="P:L-histidine biosynthetic process"/>
    <property type="evidence" value="ECO:0007669"/>
    <property type="project" value="UniProtKB-UniRule"/>
</dbReference>
<dbReference type="Gene3D" id="3.30.930.10">
    <property type="entry name" value="Bira Bifunctional Protein, Domain 2"/>
    <property type="match status" value="1"/>
</dbReference>
<dbReference type="HAMAP" id="MF_00125">
    <property type="entry name" value="HisZ"/>
    <property type="match status" value="1"/>
</dbReference>
<dbReference type="InterPro" id="IPR045864">
    <property type="entry name" value="aa-tRNA-synth_II/BPL/LPL"/>
</dbReference>
<dbReference type="InterPro" id="IPR041715">
    <property type="entry name" value="HisRS-like_core"/>
</dbReference>
<dbReference type="InterPro" id="IPR004516">
    <property type="entry name" value="HisRS/HisZ"/>
</dbReference>
<dbReference type="InterPro" id="IPR004517">
    <property type="entry name" value="HisZ"/>
</dbReference>
<dbReference type="NCBIfam" id="NF008951">
    <property type="entry name" value="PRK12295.1-4"/>
    <property type="match status" value="1"/>
</dbReference>
<dbReference type="PANTHER" id="PTHR43707:SF1">
    <property type="entry name" value="HISTIDINE--TRNA LIGASE, MITOCHONDRIAL-RELATED"/>
    <property type="match status" value="1"/>
</dbReference>
<dbReference type="PANTHER" id="PTHR43707">
    <property type="entry name" value="HISTIDYL-TRNA SYNTHETASE"/>
    <property type="match status" value="1"/>
</dbReference>
<dbReference type="Pfam" id="PF13393">
    <property type="entry name" value="tRNA-synt_His"/>
    <property type="match status" value="2"/>
</dbReference>
<dbReference type="PIRSF" id="PIRSF001549">
    <property type="entry name" value="His-tRNA_synth"/>
    <property type="match status" value="1"/>
</dbReference>
<dbReference type="SUPFAM" id="SSF55681">
    <property type="entry name" value="Class II aaRS and biotin synthetases"/>
    <property type="match status" value="1"/>
</dbReference>
<reference key="1">
    <citation type="journal article" date="2001" name="Proc. Natl. Acad. Sci. U.S.A.">
        <title>Analysis of the chromosome sequence of the legume symbiont Sinorhizobium meliloti strain 1021.</title>
        <authorList>
            <person name="Capela D."/>
            <person name="Barloy-Hubler F."/>
            <person name="Gouzy J."/>
            <person name="Bothe G."/>
            <person name="Ampe F."/>
            <person name="Batut J."/>
            <person name="Boistard P."/>
            <person name="Becker A."/>
            <person name="Boutry M."/>
            <person name="Cadieu E."/>
            <person name="Dreano S."/>
            <person name="Gloux S."/>
            <person name="Godrie T."/>
            <person name="Goffeau A."/>
            <person name="Kahn D."/>
            <person name="Kiss E."/>
            <person name="Lelaure V."/>
            <person name="Masuy D."/>
            <person name="Pohl T."/>
            <person name="Portetelle D."/>
            <person name="Puehler A."/>
            <person name="Purnelle B."/>
            <person name="Ramsperger U."/>
            <person name="Renard C."/>
            <person name="Thebault P."/>
            <person name="Vandenbol M."/>
            <person name="Weidner S."/>
            <person name="Galibert F."/>
        </authorList>
    </citation>
    <scope>NUCLEOTIDE SEQUENCE [LARGE SCALE GENOMIC DNA]</scope>
    <source>
        <strain>1021</strain>
    </source>
</reference>
<reference key="2">
    <citation type="journal article" date="2001" name="Science">
        <title>The composite genome of the legume symbiont Sinorhizobium meliloti.</title>
        <authorList>
            <person name="Galibert F."/>
            <person name="Finan T.M."/>
            <person name="Long S.R."/>
            <person name="Puehler A."/>
            <person name="Abola P."/>
            <person name="Ampe F."/>
            <person name="Barloy-Hubler F."/>
            <person name="Barnett M.J."/>
            <person name="Becker A."/>
            <person name="Boistard P."/>
            <person name="Bothe G."/>
            <person name="Boutry M."/>
            <person name="Bowser L."/>
            <person name="Buhrmester J."/>
            <person name="Cadieu E."/>
            <person name="Capela D."/>
            <person name="Chain P."/>
            <person name="Cowie A."/>
            <person name="Davis R.W."/>
            <person name="Dreano S."/>
            <person name="Federspiel N.A."/>
            <person name="Fisher R.F."/>
            <person name="Gloux S."/>
            <person name="Godrie T."/>
            <person name="Goffeau A."/>
            <person name="Golding B."/>
            <person name="Gouzy J."/>
            <person name="Gurjal M."/>
            <person name="Hernandez-Lucas I."/>
            <person name="Hong A."/>
            <person name="Huizar L."/>
            <person name="Hyman R.W."/>
            <person name="Jones T."/>
            <person name="Kahn D."/>
            <person name="Kahn M.L."/>
            <person name="Kalman S."/>
            <person name="Keating D.H."/>
            <person name="Kiss E."/>
            <person name="Komp C."/>
            <person name="Lelaure V."/>
            <person name="Masuy D."/>
            <person name="Palm C."/>
            <person name="Peck M.C."/>
            <person name="Pohl T.M."/>
            <person name="Portetelle D."/>
            <person name="Purnelle B."/>
            <person name="Ramsperger U."/>
            <person name="Surzycki R."/>
            <person name="Thebault P."/>
            <person name="Vandenbol M."/>
            <person name="Vorhoelter F.J."/>
            <person name="Weidner S."/>
            <person name="Wells D.H."/>
            <person name="Wong K."/>
            <person name="Yeh K.-C."/>
            <person name="Batut J."/>
        </authorList>
    </citation>
    <scope>NUCLEOTIDE SEQUENCE [LARGE SCALE GENOMIC DNA]</scope>
    <source>
        <strain>1021</strain>
    </source>
</reference>
<evidence type="ECO:0000250" key="1"/>
<evidence type="ECO:0000305" key="2"/>
<proteinExistence type="inferred from homology"/>
<protein>
    <recommendedName>
        <fullName>ATP phosphoribosyltransferase regulatory subunit</fullName>
    </recommendedName>
</protein>
<accession>Q92KL6</accession>
<comment type="function">
    <text evidence="1">Required for the first step of histidine biosynthesis. May allow the feedback regulation of ATP phosphoribosyltransferase activity by histidine (By similarity).</text>
</comment>
<comment type="pathway">
    <text>Amino-acid biosynthesis; L-histidine biosynthesis; L-histidine from 5-phospho-alpha-D-ribose 1-diphosphate: step 1/9.</text>
</comment>
<comment type="subunit">
    <text evidence="1">Heteromultimer composed of HisG and HisZ subunits.</text>
</comment>
<comment type="subcellular location">
    <subcellularLocation>
        <location evidence="1">Cytoplasm</location>
    </subcellularLocation>
</comment>
<comment type="miscellaneous">
    <text>This function is generally fulfilled by the C-terminal part of HisG, which is missing in some bacteria such as this one.</text>
</comment>
<comment type="similarity">
    <text evidence="2">Belongs to the class-II aminoacyl-tRNA synthetase family. HisZ subfamily.</text>
</comment>
<sequence length="379" mass="41286">MPLINLPAFAGDLLADFERRNTLRVDTPVIQPAEPFLDMAGEDLRRRIFMTESETGESLCLRPEFTIPVCLRHIETATGTPQRYAYLGEVFRQRREGSSEFYQAGIEDLGDPDTAAADARVVGDAMFVLANRLPGERLKVTLGDQSVFEAVIAACGLPGGWQKRLIHAFGDQKQLERLLAALADPKSPGVFGHDVERVAALGMLEDEERLVAHIGETMKATGYSTNAGRSPRDIARRLKEKVELAAIRLDKEALGVMRAFLALDLPLADAPAALHRFAGKARLKIDDALALFDARVAALARAGADPGLMRYRAAFGRPLDYYTGLVFEIGVEGTPAVLAGGGRFDRLLTLLGAREHIPAVGFSLWLDRIEQAIAAGRAE</sequence>